<reference evidence="6" key="1">
    <citation type="journal article" date="2006" name="J. Endocrinol.">
        <title>Skin secretions of Rana saharica frogs reveal antimicrobial peptides esculentins-1 and -1B and brevinins-1E and -2EC with novel insulin releasing activity.</title>
        <authorList>
            <person name="Marenah L."/>
            <person name="Flatt P.R."/>
            <person name="Orr D.F."/>
            <person name="Shaw C."/>
            <person name="Abdel-Wahab Y.H.A."/>
        </authorList>
    </citation>
    <scope>PROTEIN SEQUENCE</scope>
    <scope>FUNCTION</scope>
    <scope>SUBCELLULAR LOCATION</scope>
    <scope>TISSUE SPECIFICITY</scope>
    <scope>MASS SPECTROMETRY</scope>
    <source>
        <tissue evidence="4">Skin secretion</tissue>
    </source>
</reference>
<name>ES1_PELSA</name>
<protein>
    <recommendedName>
        <fullName evidence="5">Esculentin-1</fullName>
    </recommendedName>
</protein>
<evidence type="ECO:0000250" key="1"/>
<evidence type="ECO:0000250" key="2">
    <source>
        <dbReference type="UniProtKB" id="P32414"/>
    </source>
</evidence>
<evidence type="ECO:0000255" key="3"/>
<evidence type="ECO:0000269" key="4">
    <source>
    </source>
</evidence>
<evidence type="ECO:0000303" key="5">
    <source>
    </source>
</evidence>
<evidence type="ECO:0000305" key="6"/>
<proteinExistence type="evidence at protein level"/>
<accession>P84840</accession>
<comment type="function">
    <text evidence="1 4">Antimicrobial peptide (By similarity). Stimulates insulin release by BRIN-BD11 cells in vitro.</text>
</comment>
<comment type="subcellular location">
    <subcellularLocation>
        <location evidence="4">Secreted</location>
    </subcellularLocation>
</comment>
<comment type="tissue specificity">
    <text evidence="4">Expressed by the skin glands.</text>
</comment>
<comment type="mass spectrometry"/>
<comment type="similarity">
    <text evidence="3">Belongs to the frog skin active peptide (FSAP) family. Esculentin subfamily.</text>
</comment>
<keyword id="KW-0878">Amphibian defense peptide</keyword>
<keyword id="KW-0044">Antibiotic</keyword>
<keyword id="KW-0929">Antimicrobial</keyword>
<keyword id="KW-0903">Direct protein sequencing</keyword>
<keyword id="KW-1015">Disulfide bond</keyword>
<keyword id="KW-0964">Secreted</keyword>
<organism>
    <name type="scientific">Pelophylax saharicus</name>
    <name type="common">Sahara frog</name>
    <name type="synonym">Rana saharica</name>
    <dbReference type="NCBI Taxonomy" id="70019"/>
    <lineage>
        <taxon>Eukaryota</taxon>
        <taxon>Metazoa</taxon>
        <taxon>Chordata</taxon>
        <taxon>Craniata</taxon>
        <taxon>Vertebrata</taxon>
        <taxon>Euteleostomi</taxon>
        <taxon>Amphibia</taxon>
        <taxon>Batrachia</taxon>
        <taxon>Anura</taxon>
        <taxon>Neobatrachia</taxon>
        <taxon>Ranoidea</taxon>
        <taxon>Ranidae</taxon>
        <taxon>Pelophylax</taxon>
    </lineage>
</organism>
<sequence>GIFSKFGRKKIKNLLISGLKNVGKEVGMDVVRTGIDIAGCKIKGEC</sequence>
<dbReference type="SMR" id="P84840"/>
<dbReference type="GO" id="GO:0005576">
    <property type="term" value="C:extracellular region"/>
    <property type="evidence" value="ECO:0000314"/>
    <property type="project" value="UniProtKB"/>
</dbReference>
<dbReference type="GO" id="GO:0050829">
    <property type="term" value="P:defense response to Gram-negative bacterium"/>
    <property type="evidence" value="ECO:0000250"/>
    <property type="project" value="UniProtKB"/>
</dbReference>
<dbReference type="GO" id="GO:0050830">
    <property type="term" value="P:defense response to Gram-positive bacterium"/>
    <property type="evidence" value="ECO:0000250"/>
    <property type="project" value="UniProtKB"/>
</dbReference>
<dbReference type="GO" id="GO:0032024">
    <property type="term" value="P:positive regulation of insulin secretion"/>
    <property type="evidence" value="ECO:0000314"/>
    <property type="project" value="UniProtKB"/>
</dbReference>
<dbReference type="InterPro" id="IPR012521">
    <property type="entry name" value="Antimicrobial_frog_2"/>
</dbReference>
<dbReference type="Pfam" id="PF08023">
    <property type="entry name" value="Antimicrobial_2"/>
    <property type="match status" value="1"/>
</dbReference>
<feature type="peptide" id="PRO_0000233922" description="Esculentin-1" evidence="4">
    <location>
        <begin position="1"/>
        <end position="46"/>
    </location>
</feature>
<feature type="disulfide bond" evidence="2">
    <location>
        <begin position="40"/>
        <end position="46"/>
    </location>
</feature>